<name>GLNA5_MAIZE</name>
<keyword id="KW-0067">ATP-binding</keyword>
<keyword id="KW-0963">Cytoplasm</keyword>
<keyword id="KW-0436">Ligase</keyword>
<keyword id="KW-0547">Nucleotide-binding</keyword>
<keyword id="KW-1185">Reference proteome</keyword>
<organism>
    <name type="scientific">Zea mays</name>
    <name type="common">Maize</name>
    <dbReference type="NCBI Taxonomy" id="4577"/>
    <lineage>
        <taxon>Eukaryota</taxon>
        <taxon>Viridiplantae</taxon>
        <taxon>Streptophyta</taxon>
        <taxon>Embryophyta</taxon>
        <taxon>Tracheophyta</taxon>
        <taxon>Spermatophyta</taxon>
        <taxon>Magnoliopsida</taxon>
        <taxon>Liliopsida</taxon>
        <taxon>Poales</taxon>
        <taxon>Poaceae</taxon>
        <taxon>PACMAD clade</taxon>
        <taxon>Panicoideae</taxon>
        <taxon>Andropogonodae</taxon>
        <taxon>Andropogoneae</taxon>
        <taxon>Tripsacinae</taxon>
        <taxon>Zea</taxon>
    </lineage>
</organism>
<reference key="1">
    <citation type="journal article" date="1992" name="Plant Cell Physiol.">
        <title>Molecular cloning of the family of glutamine synthetase genes from maize: expression of genes for glutamine synthetase and ferredoxin-dependent glutamate synthase in photosynthetic and non-photosynthetic tissues.</title>
        <authorList>
            <person name="Sakakibara H."/>
            <person name="Kawabata S."/>
            <person name="Takahashi H."/>
            <person name="Hase T."/>
            <person name="Sugiyama T."/>
        </authorList>
    </citation>
    <scope>NUCLEOTIDE SEQUENCE [MRNA]</scope>
    <source>
        <strain>cv. Golden cross Bantam T51</strain>
        <tissue>Leaf</tissue>
    </source>
</reference>
<reference key="2">
    <citation type="journal article" date="1993" name="Plant Mol. Biol.">
        <title>Differential expression of six glutamine synthetase genes in Zea mays.</title>
        <authorList>
            <person name="Li M.-G."/>
            <person name="Villemur R."/>
            <person name="Hussey P.J."/>
            <person name="Silflow C.D."/>
            <person name="Gantt J.S."/>
            <person name="Snustad D.P."/>
        </authorList>
    </citation>
    <scope>NUCLEOTIDE SEQUENCE [MRNA] OF 113-357</scope>
    <source>
        <strain>cv. A188</strain>
        <tissue>Seedling</tissue>
    </source>
</reference>
<gene>
    <name type="primary">GS1-5</name>
</gene>
<protein>
    <recommendedName>
        <fullName>Glutamine synthetase root isozyme 5</fullName>
        <ecNumber>6.3.1.2</ecNumber>
    </recommendedName>
    <alternativeName>
        <fullName>GS117</fullName>
    </alternativeName>
    <alternativeName>
        <fullName>Glutamate--ammonia ligase</fullName>
    </alternativeName>
</protein>
<sequence>MASLTDLVNLDLSDCTDKIIAEYIWVGGSGIDLRSKARTVKGPITDPSQLPKWNYDGSSTGQAPGEDSEVILYPQAIFKDPFRKGNNILVMCDCYTPQGEPIPSNKRYKAATVFSHPDVAAEVPWYGIEQEYTLLQKDLSWPLGWPVGGYPGPQGPYYCAAGADKAFGRDVVDAHYKACLYAGINISGINGEVMPGQWEFQVGPSVGISAGDEIWVARYILERITEMAGIVLSLDPKPIKGDWNGAGAHTNYSTKSMREAGGYEVIKEAIEKLGRRHREHIAAYGEGNERRLTGRHETADINTFKWGVANRGASIRVGRDTEKEGKGYFEDRRPASNMDPYVVTGMIADTTILWKGN</sequence>
<evidence type="ECO:0000255" key="1">
    <source>
        <dbReference type="PROSITE-ProRule" id="PRU01330"/>
    </source>
</evidence>
<evidence type="ECO:0000255" key="2">
    <source>
        <dbReference type="PROSITE-ProRule" id="PRU01331"/>
    </source>
</evidence>
<evidence type="ECO:0000305" key="3"/>
<comment type="function">
    <text>Plays a role in the flow of nitrogen into nitrogenous organic compounds.</text>
</comment>
<comment type="catalytic activity">
    <reaction>
        <text>L-glutamate + NH4(+) + ATP = L-glutamine + ADP + phosphate + H(+)</text>
        <dbReference type="Rhea" id="RHEA:16169"/>
        <dbReference type="ChEBI" id="CHEBI:15378"/>
        <dbReference type="ChEBI" id="CHEBI:28938"/>
        <dbReference type="ChEBI" id="CHEBI:29985"/>
        <dbReference type="ChEBI" id="CHEBI:30616"/>
        <dbReference type="ChEBI" id="CHEBI:43474"/>
        <dbReference type="ChEBI" id="CHEBI:58359"/>
        <dbReference type="ChEBI" id="CHEBI:456216"/>
        <dbReference type="EC" id="6.3.1.2"/>
    </reaction>
</comment>
<comment type="subunit">
    <text>Homooctamer.</text>
</comment>
<comment type="subcellular location">
    <subcellularLocation>
        <location>Cytoplasm</location>
    </subcellularLocation>
</comment>
<comment type="tissue specificity">
    <text>Found mainly in the cortical tissues of seedling roots, stem and seedling shoot.</text>
</comment>
<comment type="similarity">
    <text evidence="3">Belongs to the glutamine synthetase family.</text>
</comment>
<dbReference type="EC" id="6.3.1.2"/>
<dbReference type="EMBL" id="D14578">
    <property type="protein sequence ID" value="BAA03432.1"/>
    <property type="status" value="ALT_SEQ"/>
    <property type="molecule type" value="mRNA"/>
</dbReference>
<dbReference type="EMBL" id="X65930">
    <property type="protein sequence ID" value="CAA46723.1"/>
    <property type="molecule type" value="mRNA"/>
</dbReference>
<dbReference type="PIR" id="S39481">
    <property type="entry name" value="S39481"/>
</dbReference>
<dbReference type="SMR" id="P38563"/>
<dbReference type="FunCoup" id="P38563">
    <property type="interactions" value="2169"/>
</dbReference>
<dbReference type="STRING" id="4577.P38563"/>
<dbReference type="MaizeGDB" id="17151"/>
<dbReference type="InParanoid" id="P38563"/>
<dbReference type="Proteomes" id="UP000007305">
    <property type="component" value="Unplaced"/>
</dbReference>
<dbReference type="ExpressionAtlas" id="P38563">
    <property type="expression patterns" value="baseline and differential"/>
</dbReference>
<dbReference type="GO" id="GO:0005737">
    <property type="term" value="C:cytoplasm"/>
    <property type="evidence" value="ECO:0000318"/>
    <property type="project" value="GO_Central"/>
</dbReference>
<dbReference type="GO" id="GO:0005524">
    <property type="term" value="F:ATP binding"/>
    <property type="evidence" value="ECO:0007669"/>
    <property type="project" value="UniProtKB-KW"/>
</dbReference>
<dbReference type="GO" id="GO:0004356">
    <property type="term" value="F:glutamine synthetase activity"/>
    <property type="evidence" value="ECO:0000318"/>
    <property type="project" value="GO_Central"/>
</dbReference>
<dbReference type="GO" id="GO:0006542">
    <property type="term" value="P:glutamine biosynthetic process"/>
    <property type="evidence" value="ECO:0000318"/>
    <property type="project" value="GO_Central"/>
</dbReference>
<dbReference type="FunFam" id="3.30.590.10:FF:000004">
    <property type="entry name" value="Glutamine synthetase"/>
    <property type="match status" value="1"/>
</dbReference>
<dbReference type="FunFam" id="3.10.20.70:FF:000003">
    <property type="entry name" value="Glutamine synthetase, chloroplastic"/>
    <property type="match status" value="1"/>
</dbReference>
<dbReference type="Gene3D" id="3.10.20.70">
    <property type="entry name" value="Glutamine synthetase, N-terminal domain"/>
    <property type="match status" value="1"/>
</dbReference>
<dbReference type="Gene3D" id="3.30.590.10">
    <property type="entry name" value="Glutamine synthetase/guanido kinase, catalytic domain"/>
    <property type="match status" value="1"/>
</dbReference>
<dbReference type="InterPro" id="IPR008147">
    <property type="entry name" value="Gln_synt_N"/>
</dbReference>
<dbReference type="InterPro" id="IPR036651">
    <property type="entry name" value="Gln_synt_N_sf"/>
</dbReference>
<dbReference type="InterPro" id="IPR014746">
    <property type="entry name" value="Gln_synth/guanido_kin_cat_dom"/>
</dbReference>
<dbReference type="InterPro" id="IPR008146">
    <property type="entry name" value="Gln_synth_cat_dom"/>
</dbReference>
<dbReference type="InterPro" id="IPR027303">
    <property type="entry name" value="Gln_synth_gly_rich_site"/>
</dbReference>
<dbReference type="InterPro" id="IPR027302">
    <property type="entry name" value="Gln_synth_N_conserv_site"/>
</dbReference>
<dbReference type="InterPro" id="IPR050292">
    <property type="entry name" value="Glutamine_Synthetase"/>
</dbReference>
<dbReference type="PANTHER" id="PTHR20852">
    <property type="entry name" value="GLUTAMINE SYNTHETASE"/>
    <property type="match status" value="1"/>
</dbReference>
<dbReference type="PANTHER" id="PTHR20852:SF109">
    <property type="entry name" value="GLUTAMINE SYNTHETASE CYTOSOLIC ISOZYME 1-2"/>
    <property type="match status" value="1"/>
</dbReference>
<dbReference type="Pfam" id="PF00120">
    <property type="entry name" value="Gln-synt_C"/>
    <property type="match status" value="1"/>
</dbReference>
<dbReference type="Pfam" id="PF03951">
    <property type="entry name" value="Gln-synt_N"/>
    <property type="match status" value="1"/>
</dbReference>
<dbReference type="SMART" id="SM01230">
    <property type="entry name" value="Gln-synt_C"/>
    <property type="match status" value="1"/>
</dbReference>
<dbReference type="SUPFAM" id="SSF54368">
    <property type="entry name" value="Glutamine synthetase, N-terminal domain"/>
    <property type="match status" value="1"/>
</dbReference>
<dbReference type="SUPFAM" id="SSF55931">
    <property type="entry name" value="Glutamine synthetase/guanido kinase"/>
    <property type="match status" value="1"/>
</dbReference>
<dbReference type="PROSITE" id="PS00180">
    <property type="entry name" value="GLNA_1"/>
    <property type="match status" value="1"/>
</dbReference>
<dbReference type="PROSITE" id="PS00181">
    <property type="entry name" value="GLNA_ATP"/>
    <property type="match status" value="1"/>
</dbReference>
<dbReference type="PROSITE" id="PS51986">
    <property type="entry name" value="GS_BETA_GRASP"/>
    <property type="match status" value="1"/>
</dbReference>
<dbReference type="PROSITE" id="PS51987">
    <property type="entry name" value="GS_CATALYTIC"/>
    <property type="match status" value="1"/>
</dbReference>
<proteinExistence type="evidence at transcript level"/>
<feature type="chain" id="PRO_0000153182" description="Glutamine synthetase root isozyme 5">
    <location>
        <begin position="1"/>
        <end position="357"/>
    </location>
</feature>
<feature type="domain" description="GS beta-grasp" evidence="1">
    <location>
        <begin position="19"/>
        <end position="99"/>
    </location>
</feature>
<feature type="domain" description="GS catalytic" evidence="2">
    <location>
        <begin position="106"/>
        <end position="357"/>
    </location>
</feature>
<feature type="sequence conflict" description="In Ref. 2; CAA46723." evidence="3" ref="2">
    <original>L</original>
    <variation>V</variation>
    <location>
        <position position="139"/>
    </location>
</feature>
<feature type="sequence conflict" description="In Ref. 2; CAA46723." evidence="3" ref="2">
    <original>R</original>
    <variation>K</variation>
    <location>
        <position position="275"/>
    </location>
</feature>
<feature type="sequence conflict" description="In Ref. 2; CAA46723." evidence="3" ref="2">
    <original>GE</original>
    <variation>DG</variation>
    <location>
        <begin position="285"/>
        <end position="286"/>
    </location>
</feature>
<feature type="sequence conflict" description="In Ref. 2; CAA46723." evidence="3" ref="2">
    <original>A</original>
    <variation>G</variation>
    <location>
        <position position="313"/>
    </location>
</feature>
<accession>P38563</accession>